<proteinExistence type="evidence at transcript level"/>
<name>GPA7_DICDI</name>
<organism>
    <name type="scientific">Dictyostelium discoideum</name>
    <name type="common">Social amoeba</name>
    <dbReference type="NCBI Taxonomy" id="44689"/>
    <lineage>
        <taxon>Eukaryota</taxon>
        <taxon>Amoebozoa</taxon>
        <taxon>Evosea</taxon>
        <taxon>Eumycetozoa</taxon>
        <taxon>Dictyostelia</taxon>
        <taxon>Dictyosteliales</taxon>
        <taxon>Dictyosteliaceae</taxon>
        <taxon>Dictyostelium</taxon>
    </lineage>
</organism>
<reference key="1">
    <citation type="journal article" date="1994" name="Mol. Biol. Cell">
        <title>Cloning and targeted mutations of G alpha 7 and G alpha 8, two developmentally regulated G protein alpha-subunit genes in Dictyostelium.</title>
        <authorList>
            <person name="Wu L."/>
            <person name="Gaskins C.J."/>
            <person name="Zhou K."/>
            <person name="Firtel R.A."/>
            <person name="Devreotes P.N."/>
        </authorList>
    </citation>
    <scope>NUCLEOTIDE SEQUENCE [MRNA]</scope>
    <source>
        <strain>AX3</strain>
    </source>
</reference>
<reference key="2">
    <citation type="journal article" date="2002" name="Nature">
        <title>Sequence and analysis of chromosome 2 of Dictyostelium discoideum.</title>
        <authorList>
            <person name="Gloeckner G."/>
            <person name="Eichinger L."/>
            <person name="Szafranski K."/>
            <person name="Pachebat J.A."/>
            <person name="Bankier A.T."/>
            <person name="Dear P.H."/>
            <person name="Lehmann R."/>
            <person name="Baumgart C."/>
            <person name="Parra G."/>
            <person name="Abril J.F."/>
            <person name="Guigo R."/>
            <person name="Kumpf K."/>
            <person name="Tunggal B."/>
            <person name="Cox E.C."/>
            <person name="Quail M.A."/>
            <person name="Platzer M."/>
            <person name="Rosenthal A."/>
            <person name="Noegel A.A."/>
        </authorList>
    </citation>
    <scope>NUCLEOTIDE SEQUENCE [LARGE SCALE GENOMIC DNA]</scope>
    <source>
        <strain>AX4</strain>
    </source>
</reference>
<reference key="3">
    <citation type="journal article" date="2005" name="Nature">
        <title>The genome of the social amoeba Dictyostelium discoideum.</title>
        <authorList>
            <person name="Eichinger L."/>
            <person name="Pachebat J.A."/>
            <person name="Gloeckner G."/>
            <person name="Rajandream M.A."/>
            <person name="Sucgang R."/>
            <person name="Berriman M."/>
            <person name="Song J."/>
            <person name="Olsen R."/>
            <person name="Szafranski K."/>
            <person name="Xu Q."/>
            <person name="Tunggal B."/>
            <person name="Kummerfeld S."/>
            <person name="Madera M."/>
            <person name="Konfortov B.A."/>
            <person name="Rivero F."/>
            <person name="Bankier A.T."/>
            <person name="Lehmann R."/>
            <person name="Hamlin N."/>
            <person name="Davies R."/>
            <person name="Gaudet P."/>
            <person name="Fey P."/>
            <person name="Pilcher K."/>
            <person name="Chen G."/>
            <person name="Saunders D."/>
            <person name="Sodergren E.J."/>
            <person name="Davis P."/>
            <person name="Kerhornou A."/>
            <person name="Nie X."/>
            <person name="Hall N."/>
            <person name="Anjard C."/>
            <person name="Hemphill L."/>
            <person name="Bason N."/>
            <person name="Farbrother P."/>
            <person name="Desany B."/>
            <person name="Just E."/>
            <person name="Morio T."/>
            <person name="Rost R."/>
            <person name="Churcher C.M."/>
            <person name="Cooper J."/>
            <person name="Haydock S."/>
            <person name="van Driessche N."/>
            <person name="Cronin A."/>
            <person name="Goodhead I."/>
            <person name="Muzny D.M."/>
            <person name="Mourier T."/>
            <person name="Pain A."/>
            <person name="Lu M."/>
            <person name="Harper D."/>
            <person name="Lindsay R."/>
            <person name="Hauser H."/>
            <person name="James K.D."/>
            <person name="Quiles M."/>
            <person name="Madan Babu M."/>
            <person name="Saito T."/>
            <person name="Buchrieser C."/>
            <person name="Wardroper A."/>
            <person name="Felder M."/>
            <person name="Thangavelu M."/>
            <person name="Johnson D."/>
            <person name="Knights A."/>
            <person name="Loulseged H."/>
            <person name="Mungall K.L."/>
            <person name="Oliver K."/>
            <person name="Price C."/>
            <person name="Quail M.A."/>
            <person name="Urushihara H."/>
            <person name="Hernandez J."/>
            <person name="Rabbinowitsch E."/>
            <person name="Steffen D."/>
            <person name="Sanders M."/>
            <person name="Ma J."/>
            <person name="Kohara Y."/>
            <person name="Sharp S."/>
            <person name="Simmonds M.N."/>
            <person name="Spiegler S."/>
            <person name="Tivey A."/>
            <person name="Sugano S."/>
            <person name="White B."/>
            <person name="Walker D."/>
            <person name="Woodward J.R."/>
            <person name="Winckler T."/>
            <person name="Tanaka Y."/>
            <person name="Shaulsky G."/>
            <person name="Schleicher M."/>
            <person name="Weinstock G.M."/>
            <person name="Rosenthal A."/>
            <person name="Cox E.C."/>
            <person name="Chisholm R.L."/>
            <person name="Gibbs R.A."/>
            <person name="Loomis W.F."/>
            <person name="Platzer M."/>
            <person name="Kay R.R."/>
            <person name="Williams J.G."/>
            <person name="Dear P.H."/>
            <person name="Noegel A.A."/>
            <person name="Barrell B.G."/>
            <person name="Kuspa A."/>
        </authorList>
    </citation>
    <scope>NUCLEOTIDE SEQUENCE [LARGE SCALE GENOMIC DNA]</scope>
    <source>
        <strain>AX4</strain>
    </source>
</reference>
<reference key="4">
    <citation type="journal article" date="1991" name="Biochem. Biophys. Res. Commun.">
        <title>Dictyostelium transiently expresses eight distinct G-protein alpha-subunits during its developmental program.</title>
        <authorList>
            <person name="Wu L."/>
            <person name="Devreotes P.N."/>
        </authorList>
    </citation>
    <scope>NUCLEOTIDE SEQUENCE [MRNA] OF 84-237</scope>
    <source>
        <strain>AX3</strain>
    </source>
</reference>
<keyword id="KW-0342">GTP-binding</keyword>
<keyword id="KW-0460">Magnesium</keyword>
<keyword id="KW-0479">Metal-binding</keyword>
<keyword id="KW-0547">Nucleotide-binding</keyword>
<keyword id="KW-1185">Reference proteome</keyword>
<keyword id="KW-0807">Transducer</keyword>
<accession>P34045</accession>
<accession>Q551N2</accession>
<accession>Q86A65</accession>
<protein>
    <recommendedName>
        <fullName>Guanine nucleotide-binding protein alpha-7 subunit</fullName>
        <shortName>G alpha-7</shortName>
    </recommendedName>
</protein>
<feature type="chain" id="PRO_0000203665" description="Guanine nucleotide-binding protein alpha-7 subunit">
    <location>
        <begin position="1"/>
        <end position="390"/>
    </location>
</feature>
<feature type="domain" description="G-alpha" evidence="2">
    <location>
        <begin position="70"/>
        <end position="390"/>
    </location>
</feature>
<feature type="region of interest" description="Disordered" evidence="3">
    <location>
        <begin position="1"/>
        <end position="42"/>
    </location>
</feature>
<feature type="region of interest" description="G1 motif" evidence="2">
    <location>
        <begin position="73"/>
        <end position="86"/>
    </location>
</feature>
<feature type="region of interest" description="G2 motif" evidence="2">
    <location>
        <begin position="211"/>
        <end position="219"/>
    </location>
</feature>
<feature type="region of interest" description="G3 motif" evidence="2">
    <location>
        <begin position="234"/>
        <end position="243"/>
    </location>
</feature>
<feature type="region of interest" description="G4 motif" evidence="2">
    <location>
        <begin position="303"/>
        <end position="310"/>
    </location>
</feature>
<feature type="region of interest" description="G5 motif" evidence="2">
    <location>
        <begin position="361"/>
        <end position="366"/>
    </location>
</feature>
<feature type="compositionally biased region" description="Low complexity" evidence="3">
    <location>
        <begin position="1"/>
        <end position="12"/>
    </location>
</feature>
<feature type="compositionally biased region" description="Low complexity" evidence="3">
    <location>
        <begin position="22"/>
        <end position="42"/>
    </location>
</feature>
<feature type="binding site" evidence="1">
    <location>
        <begin position="78"/>
        <end position="85"/>
    </location>
    <ligand>
        <name>GTP</name>
        <dbReference type="ChEBI" id="CHEBI:37565"/>
    </ligand>
</feature>
<feature type="binding site" evidence="1">
    <location>
        <position position="85"/>
    </location>
    <ligand>
        <name>Mg(2+)</name>
        <dbReference type="ChEBI" id="CHEBI:18420"/>
    </ligand>
</feature>
<feature type="binding site" evidence="1">
    <location>
        <begin position="213"/>
        <end position="219"/>
    </location>
    <ligand>
        <name>GTP</name>
        <dbReference type="ChEBI" id="CHEBI:37565"/>
    </ligand>
</feature>
<feature type="binding site" evidence="1">
    <location>
        <begin position="238"/>
        <end position="242"/>
    </location>
    <ligand>
        <name>GTP</name>
        <dbReference type="ChEBI" id="CHEBI:37565"/>
    </ligand>
</feature>
<feature type="binding site" evidence="1">
    <location>
        <begin position="307"/>
        <end position="310"/>
    </location>
    <ligand>
        <name>GTP</name>
        <dbReference type="ChEBI" id="CHEBI:37565"/>
    </ligand>
</feature>
<feature type="binding site" evidence="1">
    <location>
        <position position="363"/>
    </location>
    <ligand>
        <name>GTP</name>
        <dbReference type="ChEBI" id="CHEBI:37565"/>
    </ligand>
</feature>
<feature type="sequence conflict" description="In Ref. 1; AAA67423." evidence="4" ref="1">
    <original>W</original>
    <variation>L</variation>
    <location>
        <position position="296"/>
    </location>
</feature>
<gene>
    <name type="primary">gpaG</name>
    <name type="ORF">DDB_G0276455</name>
</gene>
<evidence type="ECO:0000250" key="1"/>
<evidence type="ECO:0000255" key="2">
    <source>
        <dbReference type="PROSITE-ProRule" id="PRU01230"/>
    </source>
</evidence>
<evidence type="ECO:0000256" key="3">
    <source>
        <dbReference type="SAM" id="MobiDB-lite"/>
    </source>
</evidence>
<evidence type="ECO:0000305" key="4"/>
<comment type="function">
    <text>Guanine nucleotide-binding proteins (G proteins) are involved as modulators or transducers in various transmembrane signaling systems.</text>
</comment>
<comment type="subunit">
    <text>G proteins are composed of 3 units; alpha, beta and gamma. The alpha chain contains the guanine nucleotide binding site.</text>
</comment>
<comment type="developmental stage">
    <text>Expressed primarily at the aggregation stage.</text>
</comment>
<comment type="similarity">
    <text evidence="4">Belongs to the G-alpha family.</text>
</comment>
<sequence>MSSTTTNTTTATPAIQVNGNQSSSPQSPSSSTSTLSPPMSPSLLTRYREQKAVNKQIEKQLKEEKKIMDSELKLLLLGTGDSGKSTVVKQMKILHLEGYSQEERINQRQFVYRNIIEIAYSIIRGCGVLNLTIPSQFDSICSSIEEIYETKNYTNLDKNVLKGVAELSKNESFINAANNSGSNFQLHSSSQYFLDDIARFSEEDYIPTDQDILYTRVASTSVSETRFSVRGIKFRMIDVAGQRGHRDKWIHHFSEVTAILFVISLCEYDQVLEEDGKTNRMIESIKVFGDIINQRWFKDIPIILFLNKRDLFAEKIKKTGISICFPDYTGPSDDYEQSLVFLKKKILSANKTSKAVYTNVTTATDTTNIGHVFEAVKDILTRQTMEEGGI</sequence>
<dbReference type="EMBL" id="L33847">
    <property type="protein sequence ID" value="AAA67423.1"/>
    <property type="molecule type" value="mRNA"/>
</dbReference>
<dbReference type="EMBL" id="AAFI02000015">
    <property type="protein sequence ID" value="EAL69181.1"/>
    <property type="molecule type" value="Genomic_DNA"/>
</dbReference>
<dbReference type="PIR" id="JH0248">
    <property type="entry name" value="JH0248"/>
</dbReference>
<dbReference type="RefSeq" id="XP_643087.1">
    <property type="nucleotide sequence ID" value="XM_637995.1"/>
</dbReference>
<dbReference type="SMR" id="P34045"/>
<dbReference type="FunCoup" id="P34045">
    <property type="interactions" value="5"/>
</dbReference>
<dbReference type="STRING" id="44689.P34045"/>
<dbReference type="PaxDb" id="44689-DDB0185045"/>
<dbReference type="EnsemblProtists" id="EAL69181">
    <property type="protein sequence ID" value="EAL69181"/>
    <property type="gene ID" value="DDB_G0276455"/>
</dbReference>
<dbReference type="GeneID" id="8620491"/>
<dbReference type="KEGG" id="ddi:DDB_G0276455"/>
<dbReference type="dictyBase" id="DDB_G0276455">
    <property type="gene designation" value="gpaG"/>
</dbReference>
<dbReference type="VEuPathDB" id="AmoebaDB:DDB_G0276455"/>
<dbReference type="eggNOG" id="KOG0082">
    <property type="taxonomic scope" value="Eukaryota"/>
</dbReference>
<dbReference type="HOGENOM" id="CLU_014184_6_0_1"/>
<dbReference type="InParanoid" id="P34045"/>
<dbReference type="OMA" id="GHRDKWI"/>
<dbReference type="PhylomeDB" id="P34045"/>
<dbReference type="Reactome" id="R-DDI-112043">
    <property type="pathway name" value="PLC beta mediated events"/>
</dbReference>
<dbReference type="Reactome" id="R-DDI-170660">
    <property type="pathway name" value="Adenylate cyclase activating pathway"/>
</dbReference>
<dbReference type="Reactome" id="R-DDI-170670">
    <property type="pathway name" value="Adenylate cyclase inhibitory pathway"/>
</dbReference>
<dbReference type="Reactome" id="R-DDI-202040">
    <property type="pathway name" value="G-protein activation"/>
</dbReference>
<dbReference type="Reactome" id="R-DDI-399997">
    <property type="pathway name" value="Acetylcholine regulates insulin secretion"/>
</dbReference>
<dbReference type="Reactome" id="R-DDI-416476">
    <property type="pathway name" value="G alpha (q) signalling events"/>
</dbReference>
<dbReference type="Reactome" id="R-DDI-416482">
    <property type="pathway name" value="G alpha (12/13) signalling events"/>
</dbReference>
<dbReference type="Reactome" id="R-DDI-418592">
    <property type="pathway name" value="ADP signalling through P2Y purinoceptor 1"/>
</dbReference>
<dbReference type="Reactome" id="R-DDI-434316">
    <property type="pathway name" value="Fatty Acids bound to GPR40 (FFAR1) regulate insulin secretion"/>
</dbReference>
<dbReference type="Reactome" id="R-DDI-9013148">
    <property type="pathway name" value="CDC42 GTPase cycle"/>
</dbReference>
<dbReference type="Reactome" id="R-DDI-9013149">
    <property type="pathway name" value="RAC1 GTPase cycle"/>
</dbReference>
<dbReference type="Reactome" id="R-DDI-9856530">
    <property type="pathway name" value="High laminar flow shear stress activates signaling by PIEZO1 and PECAM1:CDH5:KDR in endothelial cells"/>
</dbReference>
<dbReference type="PRO" id="PR:P34045"/>
<dbReference type="Proteomes" id="UP000002195">
    <property type="component" value="Chromosome 2"/>
</dbReference>
<dbReference type="GO" id="GO:0005737">
    <property type="term" value="C:cytoplasm"/>
    <property type="evidence" value="ECO:0000318"/>
    <property type="project" value="GO_Central"/>
</dbReference>
<dbReference type="GO" id="GO:0005834">
    <property type="term" value="C:heterotrimeric G-protein complex"/>
    <property type="evidence" value="ECO:0000318"/>
    <property type="project" value="GO_Central"/>
</dbReference>
<dbReference type="GO" id="GO:0001664">
    <property type="term" value="F:G protein-coupled receptor binding"/>
    <property type="evidence" value="ECO:0000318"/>
    <property type="project" value="GO_Central"/>
</dbReference>
<dbReference type="GO" id="GO:0031683">
    <property type="term" value="F:G-protein beta/gamma-subunit complex binding"/>
    <property type="evidence" value="ECO:0000318"/>
    <property type="project" value="GO_Central"/>
</dbReference>
<dbReference type="GO" id="GO:0005525">
    <property type="term" value="F:GTP binding"/>
    <property type="evidence" value="ECO:0007669"/>
    <property type="project" value="UniProtKB-KW"/>
</dbReference>
<dbReference type="GO" id="GO:0003924">
    <property type="term" value="F:GTPase activity"/>
    <property type="evidence" value="ECO:0000318"/>
    <property type="project" value="GO_Central"/>
</dbReference>
<dbReference type="GO" id="GO:0046872">
    <property type="term" value="F:metal ion binding"/>
    <property type="evidence" value="ECO:0007669"/>
    <property type="project" value="UniProtKB-KW"/>
</dbReference>
<dbReference type="GO" id="GO:0007188">
    <property type="term" value="P:adenylate cyclase-modulating G protein-coupled receptor signaling pathway"/>
    <property type="evidence" value="ECO:0000318"/>
    <property type="project" value="GO_Central"/>
</dbReference>
<dbReference type="GO" id="GO:0007214">
    <property type="term" value="P:gamma-aminobutyric acid signaling pathway"/>
    <property type="evidence" value="ECO:0000315"/>
    <property type="project" value="dictyBase"/>
</dbReference>
<dbReference type="CDD" id="cd00066">
    <property type="entry name" value="G-alpha"/>
    <property type="match status" value="1"/>
</dbReference>
<dbReference type="FunFam" id="3.40.50.300:FF:002307">
    <property type="entry name" value="Guanine nucleotide-binding protein G(k) subunit alpha"/>
    <property type="match status" value="1"/>
</dbReference>
<dbReference type="Gene3D" id="1.10.400.10">
    <property type="entry name" value="GI Alpha 1, domain 2-like"/>
    <property type="match status" value="1"/>
</dbReference>
<dbReference type="Gene3D" id="3.40.50.300">
    <property type="entry name" value="P-loop containing nucleotide triphosphate hydrolases"/>
    <property type="match status" value="1"/>
</dbReference>
<dbReference type="InterPro" id="IPR001019">
    <property type="entry name" value="Gprotein_alpha_su"/>
</dbReference>
<dbReference type="InterPro" id="IPR011025">
    <property type="entry name" value="GproteinA_insert"/>
</dbReference>
<dbReference type="InterPro" id="IPR027417">
    <property type="entry name" value="P-loop_NTPase"/>
</dbReference>
<dbReference type="PANTHER" id="PTHR10218">
    <property type="entry name" value="GTP-BINDING PROTEIN ALPHA SUBUNIT"/>
    <property type="match status" value="1"/>
</dbReference>
<dbReference type="PANTHER" id="PTHR10218:SF188">
    <property type="entry name" value="GUANINE NUCLEOTIDE-BINDING PROTEIN ALPHA-7 SUBUNIT"/>
    <property type="match status" value="1"/>
</dbReference>
<dbReference type="Pfam" id="PF00503">
    <property type="entry name" value="G-alpha"/>
    <property type="match status" value="1"/>
</dbReference>
<dbReference type="PRINTS" id="PR00318">
    <property type="entry name" value="GPROTEINA"/>
</dbReference>
<dbReference type="SMART" id="SM00275">
    <property type="entry name" value="G_alpha"/>
    <property type="match status" value="1"/>
</dbReference>
<dbReference type="SUPFAM" id="SSF52540">
    <property type="entry name" value="P-loop containing nucleoside triphosphate hydrolases"/>
    <property type="match status" value="1"/>
</dbReference>
<dbReference type="SUPFAM" id="SSF47895">
    <property type="entry name" value="Transducin (alpha subunit), insertion domain"/>
    <property type="match status" value="1"/>
</dbReference>
<dbReference type="PROSITE" id="PS51882">
    <property type="entry name" value="G_ALPHA"/>
    <property type="match status" value="1"/>
</dbReference>